<organism>
    <name type="scientific">Helicobacter pylori (strain Shi470)</name>
    <dbReference type="NCBI Taxonomy" id="512562"/>
    <lineage>
        <taxon>Bacteria</taxon>
        <taxon>Pseudomonadati</taxon>
        <taxon>Campylobacterota</taxon>
        <taxon>Epsilonproteobacteria</taxon>
        <taxon>Campylobacterales</taxon>
        <taxon>Helicobacteraceae</taxon>
        <taxon>Helicobacter</taxon>
    </lineage>
</organism>
<proteinExistence type="inferred from homology"/>
<accession>B2UVV4</accession>
<comment type="function">
    <text evidence="1">Associates with the EF-Tu.GDP complex and induces the exchange of GDP to GTP. It remains bound to the aminoacyl-tRNA.EF-Tu.GTP complex up to the GTP hydrolysis stage on the ribosome.</text>
</comment>
<comment type="subcellular location">
    <subcellularLocation>
        <location evidence="1">Cytoplasm</location>
    </subcellularLocation>
</comment>
<comment type="similarity">
    <text evidence="1">Belongs to the EF-Ts family.</text>
</comment>
<evidence type="ECO:0000255" key="1">
    <source>
        <dbReference type="HAMAP-Rule" id="MF_00050"/>
    </source>
</evidence>
<sequence>MSGISAQLVKKLRDLTDAGMMDCKKALVEVAGDLQKAIDFLREKGLSKAAKKADRIAAEGVIALEVVPDFKSAMMVEINSETDFVAKNEGFKELVKKTLETIKAHNIHTTEELLKSPLDNKPFEEYLHSQIAVIGENILVRKIAHLKAPSFHIINGYAHSNARVGVLITIKYDNEKNAPKVVELARNIAMHAAAMKPQVLDSKDFSLDFVKKETLALIAEIEKDNEEAKRLGKPLKNIPTFGSRIELSDEVLAHQKKAFEDELKAQGKPEKIWDKIVPGKMERFIADNTLIDQRLTLLGQFYVMDDKKTIAQVVADCSKEWDDHLTITEYVRFELGEGIEKKAENFAEEVALQMK</sequence>
<keyword id="KW-0963">Cytoplasm</keyword>
<keyword id="KW-0251">Elongation factor</keyword>
<keyword id="KW-0648">Protein biosynthesis</keyword>
<gene>
    <name evidence="1" type="primary">tsf</name>
    <name type="ordered locus">HPSH_08005</name>
</gene>
<feature type="chain" id="PRO_1000116746" description="Elongation factor Ts">
    <location>
        <begin position="1"/>
        <end position="355"/>
    </location>
</feature>
<feature type="region of interest" description="Involved in Mg(2+) ion dislocation from EF-Tu" evidence="1">
    <location>
        <begin position="82"/>
        <end position="85"/>
    </location>
</feature>
<name>EFTS_HELPS</name>
<reference key="1">
    <citation type="submission" date="2008-05" db="EMBL/GenBank/DDBJ databases">
        <title>Genome sequence of Helicobacter pylori from the remote Amazon: traces of Asian ancestry of the first Americans.</title>
        <authorList>
            <person name="Kersulyte D."/>
            <person name="Kalia A."/>
            <person name="Gilman R.H."/>
            <person name="Berg D.E."/>
        </authorList>
    </citation>
    <scope>NUCLEOTIDE SEQUENCE [LARGE SCALE GENOMIC DNA]</scope>
    <source>
        <strain>Shi470</strain>
    </source>
</reference>
<protein>
    <recommendedName>
        <fullName evidence="1">Elongation factor Ts</fullName>
        <shortName evidence="1">EF-Ts</shortName>
    </recommendedName>
</protein>
<dbReference type="EMBL" id="CP001072">
    <property type="protein sequence ID" value="ACD48986.1"/>
    <property type="molecule type" value="Genomic_DNA"/>
</dbReference>
<dbReference type="RefSeq" id="WP_000014395.1">
    <property type="nucleotide sequence ID" value="NC_010698.2"/>
</dbReference>
<dbReference type="SMR" id="B2UVV4"/>
<dbReference type="KEGG" id="hps:HPSH_08005"/>
<dbReference type="HOGENOM" id="CLU_047155_0_1_7"/>
<dbReference type="GO" id="GO:0005737">
    <property type="term" value="C:cytoplasm"/>
    <property type="evidence" value="ECO:0007669"/>
    <property type="project" value="UniProtKB-SubCell"/>
</dbReference>
<dbReference type="GO" id="GO:0003746">
    <property type="term" value="F:translation elongation factor activity"/>
    <property type="evidence" value="ECO:0007669"/>
    <property type="project" value="UniProtKB-UniRule"/>
</dbReference>
<dbReference type="CDD" id="cd14275">
    <property type="entry name" value="UBA_EF-Ts"/>
    <property type="match status" value="1"/>
</dbReference>
<dbReference type="FunFam" id="1.10.286.20:FF:000004">
    <property type="entry name" value="Elongation factor Ts"/>
    <property type="match status" value="1"/>
</dbReference>
<dbReference type="FunFam" id="1.10.8.10:FF:000001">
    <property type="entry name" value="Elongation factor Ts"/>
    <property type="match status" value="1"/>
</dbReference>
<dbReference type="FunFam" id="3.30.479.20:FF:000029">
    <property type="entry name" value="Elongation factor Ts"/>
    <property type="match status" value="1"/>
</dbReference>
<dbReference type="Gene3D" id="1.10.286.20">
    <property type="match status" value="1"/>
</dbReference>
<dbReference type="Gene3D" id="1.10.8.10">
    <property type="entry name" value="DNA helicase RuvA subunit, C-terminal domain"/>
    <property type="match status" value="1"/>
</dbReference>
<dbReference type="Gene3D" id="3.30.479.20">
    <property type="entry name" value="Elongation factor Ts, dimerisation domain"/>
    <property type="match status" value="2"/>
</dbReference>
<dbReference type="HAMAP" id="MF_00050">
    <property type="entry name" value="EF_Ts"/>
    <property type="match status" value="1"/>
</dbReference>
<dbReference type="InterPro" id="IPR036402">
    <property type="entry name" value="EF-Ts_dimer_sf"/>
</dbReference>
<dbReference type="InterPro" id="IPR001816">
    <property type="entry name" value="Transl_elong_EFTs/EF1B"/>
</dbReference>
<dbReference type="InterPro" id="IPR014039">
    <property type="entry name" value="Transl_elong_EFTs/EF1B_dimer"/>
</dbReference>
<dbReference type="InterPro" id="IPR018101">
    <property type="entry name" value="Transl_elong_Ts_CS"/>
</dbReference>
<dbReference type="InterPro" id="IPR009060">
    <property type="entry name" value="UBA-like_sf"/>
</dbReference>
<dbReference type="NCBIfam" id="TIGR00116">
    <property type="entry name" value="tsf"/>
    <property type="match status" value="1"/>
</dbReference>
<dbReference type="PANTHER" id="PTHR11741">
    <property type="entry name" value="ELONGATION FACTOR TS"/>
    <property type="match status" value="1"/>
</dbReference>
<dbReference type="PANTHER" id="PTHR11741:SF0">
    <property type="entry name" value="ELONGATION FACTOR TS, MITOCHONDRIAL"/>
    <property type="match status" value="1"/>
</dbReference>
<dbReference type="Pfam" id="PF00889">
    <property type="entry name" value="EF_TS"/>
    <property type="match status" value="1"/>
</dbReference>
<dbReference type="SUPFAM" id="SSF54713">
    <property type="entry name" value="Elongation factor Ts (EF-Ts), dimerisation domain"/>
    <property type="match status" value="2"/>
</dbReference>
<dbReference type="SUPFAM" id="SSF46934">
    <property type="entry name" value="UBA-like"/>
    <property type="match status" value="1"/>
</dbReference>
<dbReference type="PROSITE" id="PS01126">
    <property type="entry name" value="EF_TS_1"/>
    <property type="match status" value="1"/>
</dbReference>
<dbReference type="PROSITE" id="PS01127">
    <property type="entry name" value="EF_TS_2"/>
    <property type="match status" value="1"/>
</dbReference>